<proteinExistence type="evidence at protein level"/>
<organism>
    <name type="scientific">Bos taurus</name>
    <name type="common">Bovine</name>
    <dbReference type="NCBI Taxonomy" id="9913"/>
    <lineage>
        <taxon>Eukaryota</taxon>
        <taxon>Metazoa</taxon>
        <taxon>Chordata</taxon>
        <taxon>Craniata</taxon>
        <taxon>Vertebrata</taxon>
        <taxon>Euteleostomi</taxon>
        <taxon>Mammalia</taxon>
        <taxon>Eutheria</taxon>
        <taxon>Laurasiatheria</taxon>
        <taxon>Artiodactyla</taxon>
        <taxon>Ruminantia</taxon>
        <taxon>Pecora</taxon>
        <taxon>Bovidae</taxon>
        <taxon>Bovinae</taxon>
        <taxon>Bos</taxon>
    </lineage>
</organism>
<gene>
    <name type="primary">PDE6G</name>
    <name type="synonym">PDEG</name>
</gene>
<evidence type="ECO:0000256" key="1">
    <source>
        <dbReference type="SAM" id="MobiDB-lite"/>
    </source>
</evidence>
<evidence type="ECO:0000269" key="2">
    <source>
    </source>
</evidence>
<evidence type="ECO:0000269" key="3">
    <source>
    </source>
</evidence>
<evidence type="ECO:0000305" key="4"/>
<evidence type="ECO:0007829" key="5">
    <source>
        <dbReference type="PDB" id="1FQJ"/>
    </source>
</evidence>
<evidence type="ECO:0007829" key="6">
    <source>
        <dbReference type="PDB" id="2JU4"/>
    </source>
</evidence>
<evidence type="ECO:0007829" key="7">
    <source>
        <dbReference type="PDB" id="7JSN"/>
    </source>
</evidence>
<evidence type="ECO:0007829" key="8">
    <source>
        <dbReference type="PDB" id="8UFI"/>
    </source>
</evidence>
<evidence type="ECO:0007829" key="9">
    <source>
        <dbReference type="PDB" id="9CXH"/>
    </source>
</evidence>
<evidence type="ECO:0007829" key="10">
    <source>
        <dbReference type="PDB" id="9CXJ"/>
    </source>
</evidence>
<sequence>MNLEPPKAEIRSATRVMGGPVTPRKGPPKFKQRQTRQFKSKPPKKGVQGFGDDIPGMEGLGTDITVICPWEAFNHLELHELAQYGII</sequence>
<protein>
    <recommendedName>
        <fullName>Retinal rod rhodopsin-sensitive cGMP 3',5'-cyclic phosphodiesterase subunit gamma</fullName>
        <shortName>GMP-PDE gamma</shortName>
        <ecNumber>3.1.4.35</ecNumber>
    </recommendedName>
</protein>
<accession>P04972</accession>
<keyword id="KW-0002">3D-structure</keyword>
<keyword id="KW-0007">Acetylation</keyword>
<keyword id="KW-0140">cGMP</keyword>
<keyword id="KW-0903">Direct protein sequencing</keyword>
<keyword id="KW-0378">Hydrolase</keyword>
<keyword id="KW-1185">Reference proteome</keyword>
<keyword id="KW-0716">Sensory transduction</keyword>
<keyword id="KW-0844">Vision</keyword>
<name>CNRG_BOVIN</name>
<reference key="1">
    <citation type="journal article" date="1986" name="Dokl. Akad. Nauk SSSR">
        <title>Cyclic GMP-phosphodiesterase from the cattle retina. Amino acid sequence of the gamma subunit.</title>
        <authorList>
            <person name="Ovchinnikov Y.A."/>
            <person name="Muradov K.G."/>
            <person name="Feigina M.Y."/>
            <person name="Nazimov I.V."/>
            <person name="Khoroshilova N.I."/>
        </authorList>
    </citation>
    <scope>PROTEIN SEQUENCE</scope>
    <scope>ACETYLATION AT MET-1</scope>
    <source>
        <tissue>Retina</tissue>
    </source>
</reference>
<reference key="2">
    <citation type="journal article" date="1986" name="Dokl. Biochem.">
        <title>Cyclic GMP phosphodiesterase from bovine retina. Nucleotide sequence of cDNA of the gamma-subunit.</title>
        <authorList>
            <person name="Ovchinnikov Y.A."/>
            <person name="Gubanov V.V."/>
            <person name="Khramtsov N.V."/>
            <person name="Akhmedov N.B."/>
            <person name="Zagranichny V.E."/>
            <person name="Ishchenko K.A."/>
            <person name="Muradov K.G."/>
            <person name="Barinov A.A."/>
            <person name="Bondarenko V.A."/>
            <person name="Kumarev V.P."/>
            <person name="Kobzev V.F."/>
            <person name="Lipkin V.M."/>
        </authorList>
    </citation>
    <scope>NUCLEOTIDE SEQUENCE [MRNA]</scope>
    <source>
        <tissue>Retina</tissue>
    </source>
</reference>
<reference key="3">
    <citation type="journal article" date="1986" name="FEBS Lett.">
        <title>Cyclic GMP phosphodiesterase from cattle retina. Amino acid sequence of the gamma-subunit and nucleotide sequence of the corresponding cDNA.</title>
        <authorList>
            <person name="Ovchinnikov Y.A."/>
            <person name="Lipkin V.M."/>
            <person name="Kumarev V.P."/>
            <person name="Gubanov V.V."/>
            <person name="Khramtsov N.V."/>
            <person name="Akhmedov N.B."/>
            <person name="Zagranichny V.E."/>
            <person name="Muradov K.G."/>
        </authorList>
    </citation>
    <scope>NUCLEOTIDE SEQUENCE [MRNA]</scope>
    <source>
        <tissue>Retina</tissue>
    </source>
</reference>
<reference key="4">
    <citation type="journal article" date="2001" name="Nature">
        <title>Structural determinants for regulation of phosphodiesterase by a G protein at 2.0 A.</title>
        <authorList>
            <person name="Slep K.C."/>
            <person name="Kercher M.A."/>
            <person name="He W."/>
            <person name="Cowan C.W."/>
            <person name="Wensel T.G."/>
            <person name="Sigler P.B."/>
        </authorList>
    </citation>
    <scope>X-RAY CRYSTALLOGRAPHY (2.02 ANGSTROMS) OF 46-87 IN COMPLEX WITH RGS9 AND GNAT1</scope>
</reference>
<comment type="function">
    <text>Participates in processes of transmission and amplification of the visual signal. cGMP-PDEs are the effector molecules in G-protein-mediated phototransduction in vertebrate rods and cones.</text>
</comment>
<comment type="catalytic activity">
    <reaction>
        <text>3',5'-cyclic GMP + H2O = GMP + H(+)</text>
        <dbReference type="Rhea" id="RHEA:16957"/>
        <dbReference type="ChEBI" id="CHEBI:15377"/>
        <dbReference type="ChEBI" id="CHEBI:15378"/>
        <dbReference type="ChEBI" id="CHEBI:57746"/>
        <dbReference type="ChEBI" id="CHEBI:58115"/>
        <dbReference type="EC" id="3.1.4.35"/>
    </reaction>
</comment>
<comment type="subunit">
    <text evidence="2">Oligomer composed of two catalytic chains (alpha and beta), an inhibitory chain (gamma) and the delta chain.</text>
</comment>
<comment type="similarity">
    <text evidence="4">Belongs to the rod/cone cGMP-PDE gamma subunit family.</text>
</comment>
<dbReference type="EC" id="3.1.4.35"/>
<dbReference type="EMBL" id="X04823">
    <property type="protein sequence ID" value="CAA28507.1"/>
    <property type="molecule type" value="mRNA"/>
</dbReference>
<dbReference type="EMBL" id="X04270">
    <property type="protein sequence ID" value="CAA27821.1"/>
    <property type="molecule type" value="mRNA"/>
</dbReference>
<dbReference type="PIR" id="A25268">
    <property type="entry name" value="A25268"/>
</dbReference>
<dbReference type="RefSeq" id="NP_776846.1">
    <property type="nucleotide sequence ID" value="NM_174421.2"/>
</dbReference>
<dbReference type="RefSeq" id="XP_010814750.1">
    <property type="nucleotide sequence ID" value="XM_010816448.4"/>
</dbReference>
<dbReference type="RefSeq" id="XP_010814751.1">
    <property type="nucleotide sequence ID" value="XM_010816449.1"/>
</dbReference>
<dbReference type="PDB" id="1FQJ">
    <property type="method" value="X-ray"/>
    <property type="resolution" value="2.02 A"/>
    <property type="chains" value="C=46-87"/>
</dbReference>
<dbReference type="PDB" id="2JU4">
    <property type="method" value="NMR"/>
    <property type="chains" value="A=1-87"/>
</dbReference>
<dbReference type="PDB" id="3JAB">
    <property type="method" value="EM"/>
    <property type="resolution" value="11.00 A"/>
    <property type="chains" value="D/P=70-87"/>
</dbReference>
<dbReference type="PDB" id="3JBQ">
    <property type="method" value="EM"/>
    <property type="resolution" value="11.00 A"/>
    <property type="chains" value="D/X=70-87"/>
</dbReference>
<dbReference type="PDB" id="6MZB">
    <property type="method" value="EM"/>
    <property type="resolution" value="3.40 A"/>
    <property type="chains" value="C/D=1-87"/>
</dbReference>
<dbReference type="PDB" id="7JSN">
    <property type="method" value="EM"/>
    <property type="resolution" value="3.20 A"/>
    <property type="chains" value="C/D=1-87"/>
</dbReference>
<dbReference type="PDB" id="8UFI">
    <property type="method" value="EM"/>
    <property type="resolution" value="3.10 A"/>
    <property type="chains" value="C/D=1-87"/>
</dbReference>
<dbReference type="PDB" id="8UGB">
    <property type="method" value="EM"/>
    <property type="resolution" value="3.00 A"/>
    <property type="chains" value="C/D=1-87"/>
</dbReference>
<dbReference type="PDB" id="8UGS">
    <property type="method" value="EM"/>
    <property type="resolution" value="3.20 A"/>
    <property type="chains" value="C/D=1-87"/>
</dbReference>
<dbReference type="PDB" id="8ULG">
    <property type="method" value="EM"/>
    <property type="resolution" value="3.20 A"/>
    <property type="chains" value="C/D=1-87"/>
</dbReference>
<dbReference type="PDB" id="9CXH">
    <property type="method" value="EM"/>
    <property type="resolution" value="3.10 A"/>
    <property type="chains" value="C/D=1-87"/>
</dbReference>
<dbReference type="PDB" id="9CXI">
    <property type="method" value="EM"/>
    <property type="resolution" value="3.00 A"/>
    <property type="chains" value="C/D=1-87"/>
</dbReference>
<dbReference type="PDB" id="9CXJ">
    <property type="method" value="EM"/>
    <property type="resolution" value="3.10 A"/>
    <property type="chains" value="C/D=1-87"/>
</dbReference>
<dbReference type="PDBsum" id="1FQJ"/>
<dbReference type="PDBsum" id="2JU4"/>
<dbReference type="PDBsum" id="3JAB"/>
<dbReference type="PDBsum" id="3JBQ"/>
<dbReference type="PDBsum" id="6MZB"/>
<dbReference type="PDBsum" id="7JSN"/>
<dbReference type="PDBsum" id="8UFI"/>
<dbReference type="PDBsum" id="8UGB"/>
<dbReference type="PDBsum" id="8UGS"/>
<dbReference type="PDBsum" id="8ULG"/>
<dbReference type="PDBsum" id="9CXH"/>
<dbReference type="PDBsum" id="9CXI"/>
<dbReference type="PDBsum" id="9CXJ"/>
<dbReference type="BMRB" id="P04972"/>
<dbReference type="EMDB" id="EMD-22458"/>
<dbReference type="EMDB" id="EMD-42208"/>
<dbReference type="EMDB" id="EMD-42220"/>
<dbReference type="EMDB" id="EMD-42234"/>
<dbReference type="EMDB" id="EMD-42358"/>
<dbReference type="EMDB" id="EMD-45991"/>
<dbReference type="EMDB" id="EMD-45993"/>
<dbReference type="EMDB" id="EMD-9297"/>
<dbReference type="SMR" id="P04972"/>
<dbReference type="CORUM" id="P04972"/>
<dbReference type="FunCoup" id="P04972">
    <property type="interactions" value="56"/>
</dbReference>
<dbReference type="IntAct" id="P04972">
    <property type="interactions" value="2"/>
</dbReference>
<dbReference type="MINT" id="P04972"/>
<dbReference type="STRING" id="9913.ENSBTAP00000000459"/>
<dbReference type="BindingDB" id="P04972"/>
<dbReference type="ChEMBL" id="CHEMBL2096979"/>
<dbReference type="DrugCentral" id="P04972"/>
<dbReference type="iPTMnet" id="P04972"/>
<dbReference type="PaxDb" id="9913-ENSBTAP00000000459"/>
<dbReference type="ABCD" id="P04972">
    <property type="antibodies" value="1 sequenced antibody"/>
</dbReference>
<dbReference type="Ensembl" id="ENSBTAT00000000459.3">
    <property type="protein sequence ID" value="ENSBTAP00000000459.1"/>
    <property type="gene ID" value="ENSBTAG00000000354.3"/>
</dbReference>
<dbReference type="GeneID" id="281977"/>
<dbReference type="KEGG" id="bta:281977"/>
<dbReference type="CTD" id="5148"/>
<dbReference type="VEuPathDB" id="HostDB:ENSBTAG00000000354"/>
<dbReference type="VGNC" id="VGNC:32683">
    <property type="gene designation" value="PDE6G"/>
</dbReference>
<dbReference type="eggNOG" id="ENOG502S20G">
    <property type="taxonomic scope" value="Eukaryota"/>
</dbReference>
<dbReference type="GeneTree" id="ENSGT00390000013260"/>
<dbReference type="HOGENOM" id="CLU_170469_0_0_1"/>
<dbReference type="InParanoid" id="P04972"/>
<dbReference type="OMA" id="KGRGWHP"/>
<dbReference type="OrthoDB" id="10064411at2759"/>
<dbReference type="TreeFam" id="TF333297"/>
<dbReference type="Reactome" id="R-BTA-2485179">
    <property type="pathway name" value="Activation of the phototransduction cascade"/>
</dbReference>
<dbReference type="Reactome" id="R-BTA-2514859">
    <property type="pathway name" value="Inactivation, recovery and regulation of the phototransduction cascade"/>
</dbReference>
<dbReference type="Reactome" id="R-BTA-4086398">
    <property type="pathway name" value="Ca2+ pathway"/>
</dbReference>
<dbReference type="EvolutionaryTrace" id="P04972"/>
<dbReference type="PRO" id="PR:P04972"/>
<dbReference type="Proteomes" id="UP000009136">
    <property type="component" value="Chromosome 19"/>
</dbReference>
<dbReference type="Bgee" id="ENSBTAG00000000354">
    <property type="expression patterns" value="Expressed in retina and 30 other cell types or tissues"/>
</dbReference>
<dbReference type="GO" id="GO:0097381">
    <property type="term" value="C:photoreceptor disc membrane"/>
    <property type="evidence" value="ECO:0000304"/>
    <property type="project" value="Reactome"/>
</dbReference>
<dbReference type="GO" id="GO:0042622">
    <property type="term" value="C:photoreceptor outer segment membrane"/>
    <property type="evidence" value="ECO:0000314"/>
    <property type="project" value="CAFA"/>
</dbReference>
<dbReference type="GO" id="GO:0047555">
    <property type="term" value="F:3',5'-cyclic-GMP phosphodiesterase activity"/>
    <property type="evidence" value="ECO:0007669"/>
    <property type="project" value="UniProtKB-EC"/>
</dbReference>
<dbReference type="GO" id="GO:0030553">
    <property type="term" value="F:cGMP binding"/>
    <property type="evidence" value="ECO:0007669"/>
    <property type="project" value="InterPro"/>
</dbReference>
<dbReference type="GO" id="GO:0060090">
    <property type="term" value="F:molecular adaptor activity"/>
    <property type="evidence" value="ECO:0000269"/>
    <property type="project" value="DisProt"/>
</dbReference>
<dbReference type="GO" id="GO:0008270">
    <property type="term" value="F:zinc ion binding"/>
    <property type="evidence" value="ECO:0000315"/>
    <property type="project" value="CAFA"/>
</dbReference>
<dbReference type="GO" id="GO:0045742">
    <property type="term" value="P:positive regulation of epidermal growth factor receptor signaling pathway"/>
    <property type="evidence" value="ECO:0000318"/>
    <property type="project" value="GO_Central"/>
</dbReference>
<dbReference type="GO" id="GO:0045745">
    <property type="term" value="P:positive regulation of G protein-coupled receptor signaling pathway"/>
    <property type="evidence" value="ECO:0000318"/>
    <property type="project" value="GO_Central"/>
</dbReference>
<dbReference type="GO" id="GO:0043410">
    <property type="term" value="P:positive regulation of MAPK cascade"/>
    <property type="evidence" value="ECO:0007669"/>
    <property type="project" value="Ensembl"/>
</dbReference>
<dbReference type="GO" id="GO:0007601">
    <property type="term" value="P:visual perception"/>
    <property type="evidence" value="ECO:0007669"/>
    <property type="project" value="UniProtKB-KW"/>
</dbReference>
<dbReference type="DisProt" id="DP00347"/>
<dbReference type="FunFam" id="4.10.1120.10:FF:000001">
    <property type="entry name" value="retinal rod rhodopsin-sensitive cGMP 3',5'-cyclic phosphodiesterase subunit gamma"/>
    <property type="match status" value="1"/>
</dbReference>
<dbReference type="Gene3D" id="4.10.1120.10">
    <property type="entry name" value="Retinal cGMP phosphodiesterase, gamma subunit"/>
    <property type="match status" value="1"/>
</dbReference>
<dbReference type="InterPro" id="IPR006952">
    <property type="entry name" value="PDE6_gamma"/>
</dbReference>
<dbReference type="InterPro" id="IPR037030">
    <property type="entry name" value="PDE6_gamma_sf"/>
</dbReference>
<dbReference type="PANTHER" id="PTHR12122">
    <property type="entry name" value="RETINAL CONE RHODOPSIN-SENSITIVE CGMP 3',5'-CYCLIC PHOSPHODIESTERASE GAMMA-SUBUNIT-RELATED"/>
    <property type="match status" value="1"/>
</dbReference>
<dbReference type="PANTHER" id="PTHR12122:SF4">
    <property type="entry name" value="RETINAL ROD RHODOPSIN-SENSITIVE CGMP 3',5'-CYCLIC PHOSPHODIESTERASE SUBUNIT GAMMA"/>
    <property type="match status" value="1"/>
</dbReference>
<dbReference type="Pfam" id="PF04868">
    <property type="entry name" value="PDE6_gamma"/>
    <property type="match status" value="1"/>
</dbReference>
<dbReference type="PIRSF" id="PIRSF000969">
    <property type="entry name" value="35-cGMP_Pdiase_g"/>
    <property type="match status" value="1"/>
</dbReference>
<feature type="chain" id="PRO_0000166113" description="Retinal rod rhodopsin-sensitive cGMP 3',5'-cyclic phosphodiesterase subunit gamma">
    <location>
        <begin position="1"/>
        <end position="87"/>
    </location>
</feature>
<feature type="region of interest" description="Disordered" evidence="1">
    <location>
        <begin position="1"/>
        <end position="55"/>
    </location>
</feature>
<feature type="compositionally biased region" description="Basic and acidic residues" evidence="1">
    <location>
        <begin position="1"/>
        <end position="12"/>
    </location>
</feature>
<feature type="compositionally biased region" description="Basic residues" evidence="1">
    <location>
        <begin position="26"/>
        <end position="44"/>
    </location>
</feature>
<feature type="modified residue" description="N-acetylmethionine" evidence="3">
    <location>
        <position position="1"/>
    </location>
</feature>
<feature type="turn" evidence="7">
    <location>
        <begin position="12"/>
        <end position="14"/>
    </location>
</feature>
<feature type="strand" evidence="6">
    <location>
        <begin position="24"/>
        <end position="27"/>
    </location>
</feature>
<feature type="strand" evidence="10">
    <location>
        <begin position="29"/>
        <end position="31"/>
    </location>
</feature>
<feature type="turn" evidence="9">
    <location>
        <begin position="37"/>
        <end position="39"/>
    </location>
</feature>
<feature type="strand" evidence="6">
    <location>
        <begin position="45"/>
        <end position="48"/>
    </location>
</feature>
<feature type="helix" evidence="8">
    <location>
        <begin position="57"/>
        <end position="59"/>
    </location>
</feature>
<feature type="helix" evidence="5">
    <location>
        <begin position="62"/>
        <end position="65"/>
    </location>
</feature>
<feature type="helix" evidence="5">
    <location>
        <begin position="69"/>
        <end position="73"/>
    </location>
</feature>
<feature type="helix" evidence="5">
    <location>
        <begin position="78"/>
        <end position="83"/>
    </location>
</feature>